<sequence length="186" mass="20172">MKAGAVESGEISKGAPPRKGLIRGLSIMDFILRIVAAIATLGSALGMGTTRQTLPFSTQFVKFRAVFSDVPTFVFFVTSNSIVCGYLVLSLVLSFFHIVRSAAVKSRVLQVFLDTVMYGLLTTGASAATAIVYEAHYGNSNTNWFPFCRQYNHFCKQISGSLIGSFIAVVLFIILILMSAISISKH</sequence>
<feature type="chain" id="PRO_0000391515" description="CASP-like protein 6">
    <location>
        <begin position="1"/>
        <end position="186"/>
    </location>
</feature>
<feature type="topological domain" description="Cytoplasmic" evidence="2">
    <location>
        <begin position="1"/>
        <end position="26"/>
    </location>
</feature>
<feature type="transmembrane region" description="Helical" evidence="2">
    <location>
        <begin position="27"/>
        <end position="47"/>
    </location>
</feature>
<feature type="topological domain" description="Extracellular" evidence="2">
    <location>
        <begin position="48"/>
        <end position="72"/>
    </location>
</feature>
<feature type="transmembrane region" description="Helical" evidence="2">
    <location>
        <begin position="73"/>
        <end position="93"/>
    </location>
</feature>
<feature type="topological domain" description="Cytoplasmic" evidence="2">
    <location>
        <begin position="94"/>
        <end position="110"/>
    </location>
</feature>
<feature type="transmembrane region" description="Helical" evidence="2">
    <location>
        <begin position="111"/>
        <end position="131"/>
    </location>
</feature>
<feature type="topological domain" description="Extracellular" evidence="2">
    <location>
        <begin position="132"/>
        <end position="162"/>
    </location>
</feature>
<feature type="transmembrane region" description="Helical" evidence="2">
    <location>
        <begin position="163"/>
        <end position="183"/>
    </location>
</feature>
<feature type="topological domain" description="Cytoplasmic" evidence="2">
    <location>
        <begin position="184"/>
        <end position="186"/>
    </location>
</feature>
<organism>
    <name type="scientific">Glycine max</name>
    <name type="common">Soybean</name>
    <name type="synonym">Glycine hispida</name>
    <dbReference type="NCBI Taxonomy" id="3847"/>
    <lineage>
        <taxon>Eukaryota</taxon>
        <taxon>Viridiplantae</taxon>
        <taxon>Streptophyta</taxon>
        <taxon>Embryophyta</taxon>
        <taxon>Tracheophyta</taxon>
        <taxon>Spermatophyta</taxon>
        <taxon>Magnoliopsida</taxon>
        <taxon>eudicotyledons</taxon>
        <taxon>Gunneridae</taxon>
        <taxon>Pentapetalae</taxon>
        <taxon>rosids</taxon>
        <taxon>fabids</taxon>
        <taxon>Fabales</taxon>
        <taxon>Fabaceae</taxon>
        <taxon>Papilionoideae</taxon>
        <taxon>50 kb inversion clade</taxon>
        <taxon>NPAAA clade</taxon>
        <taxon>indigoferoid/millettioid clade</taxon>
        <taxon>Phaseoleae</taxon>
        <taxon>Glycine</taxon>
        <taxon>Glycine subgen. Soja</taxon>
    </lineage>
</organism>
<name>CASP6_SOYBN</name>
<proteinExistence type="evidence at transcript level"/>
<evidence type="ECO:0000250" key="1"/>
<evidence type="ECO:0000255" key="2"/>
<evidence type="ECO:0000305" key="3"/>
<reference key="1">
    <citation type="submission" date="2009-08" db="EMBL/GenBank/DDBJ databases">
        <authorList>
            <person name="Cheung F."/>
            <person name="Xiao Y."/>
            <person name="Chan A."/>
            <person name="Moskal W."/>
            <person name="Town C.D."/>
        </authorList>
    </citation>
    <scope>NUCLEOTIDE SEQUENCE [LARGE SCALE MRNA]</scope>
</reference>
<reference key="2">
    <citation type="journal article" date="2014" name="Plant Physiol.">
        <title>Functional and evolutionary analysis of the CASPARIAN STRIP MEMBRANE DOMAIN PROTEIN family.</title>
        <authorList>
            <person name="Roppolo D."/>
            <person name="Boeckmann B."/>
            <person name="Pfister A."/>
            <person name="Boutet E."/>
            <person name="Rubio M.C."/>
            <person name="Denervaud-Tendon V."/>
            <person name="Vermeer J.E."/>
            <person name="Gheyselinck J."/>
            <person name="Xenarios I."/>
            <person name="Geldner N."/>
        </authorList>
    </citation>
    <scope>GENE FAMILY</scope>
    <scope>NOMENCLATURE</scope>
</reference>
<accession>C6T4A0</accession>
<protein>
    <recommendedName>
        <fullName>CASP-like protein 6</fullName>
        <shortName>GmCASP6</shortName>
    </recommendedName>
</protein>
<keyword id="KW-1003">Cell membrane</keyword>
<keyword id="KW-0961">Cell wall biogenesis/degradation</keyword>
<keyword id="KW-0472">Membrane</keyword>
<keyword id="KW-1185">Reference proteome</keyword>
<keyword id="KW-0812">Transmembrane</keyword>
<keyword id="KW-1133">Transmembrane helix</keyword>
<dbReference type="EMBL" id="BT092261">
    <property type="protein sequence ID" value="ACU16510.1"/>
    <property type="molecule type" value="mRNA"/>
</dbReference>
<dbReference type="RefSeq" id="NP_001235823.1">
    <property type="nucleotide sequence ID" value="NM_001248894.2"/>
</dbReference>
<dbReference type="SMR" id="C6T4A0"/>
<dbReference type="FunCoup" id="C6T4A0">
    <property type="interactions" value="11"/>
</dbReference>
<dbReference type="PaxDb" id="3847-GLYMA20G04470.1"/>
<dbReference type="EnsemblPlants" id="KRG89581">
    <property type="protein sequence ID" value="KRG89581"/>
    <property type="gene ID" value="GLYMA_20G033800"/>
</dbReference>
<dbReference type="GeneID" id="100527420"/>
<dbReference type="Gramene" id="KRG89581">
    <property type="protein sequence ID" value="KRG89581"/>
    <property type="gene ID" value="GLYMA_20G033800"/>
</dbReference>
<dbReference type="KEGG" id="gmx:100527420"/>
<dbReference type="HOGENOM" id="CLU_066104_3_2_1"/>
<dbReference type="InParanoid" id="C6T4A0"/>
<dbReference type="OMA" id="ANWFAVC"/>
<dbReference type="OrthoDB" id="753675at2759"/>
<dbReference type="Proteomes" id="UP000008827">
    <property type="component" value="Chromosome 20"/>
</dbReference>
<dbReference type="GO" id="GO:0005886">
    <property type="term" value="C:plasma membrane"/>
    <property type="evidence" value="ECO:0000318"/>
    <property type="project" value="GO_Central"/>
</dbReference>
<dbReference type="GO" id="GO:0042545">
    <property type="term" value="P:cell wall modification"/>
    <property type="evidence" value="ECO:0000318"/>
    <property type="project" value="GO_Central"/>
</dbReference>
<dbReference type="GO" id="GO:0007043">
    <property type="term" value="P:cell-cell junction assembly"/>
    <property type="evidence" value="ECO:0000318"/>
    <property type="project" value="GO_Central"/>
</dbReference>
<dbReference type="InterPro" id="IPR006459">
    <property type="entry name" value="CASP/CASPL"/>
</dbReference>
<dbReference type="InterPro" id="IPR006702">
    <property type="entry name" value="CASP_dom"/>
</dbReference>
<dbReference type="InterPro" id="IPR044173">
    <property type="entry name" value="CASPL"/>
</dbReference>
<dbReference type="NCBIfam" id="TIGR01569">
    <property type="entry name" value="A_tha_TIGR01569"/>
    <property type="match status" value="1"/>
</dbReference>
<dbReference type="PANTHER" id="PTHR36488:SF12">
    <property type="entry name" value="CASP-LIKE PROTEIN"/>
    <property type="match status" value="1"/>
</dbReference>
<dbReference type="PANTHER" id="PTHR36488">
    <property type="entry name" value="CASP-LIKE PROTEIN 1U1"/>
    <property type="match status" value="1"/>
</dbReference>
<dbReference type="Pfam" id="PF04535">
    <property type="entry name" value="CASP_dom"/>
    <property type="match status" value="1"/>
</dbReference>
<comment type="function">
    <text evidence="1">Regulates membrane-cell wall junctions and localized cell wall deposition. Required for establishment of the Casparian strip membrane domain (CSD) and the subsequent formation of Casparian strips, a cell wall modification of the root endodermis that determines an apoplastic barrier between the intraorganismal apoplasm and the extraorganismal apoplasm and prevents lateral diffusion (By similarity).</text>
</comment>
<comment type="subunit">
    <text evidence="1">Homodimer and heterodimers.</text>
</comment>
<comment type="subcellular location">
    <subcellularLocation>
        <location evidence="1">Cell membrane</location>
        <topology evidence="1">Multi-pass membrane protein</topology>
    </subcellularLocation>
    <text evidence="1">Very restricted localization following a belt shape within the plasma membrane which coincides with the position of the Casparian strip membrane domain in the root endodermis.</text>
</comment>
<comment type="similarity">
    <text evidence="3">Belongs to the Casparian strip membrane proteins (CASP) family.</text>
</comment>